<dbReference type="EC" id="3.6.-.-" evidence="1"/>
<dbReference type="EMBL" id="CH476619">
    <property type="protein sequence ID" value="EEP82590.1"/>
    <property type="molecule type" value="Genomic_DNA"/>
</dbReference>
<dbReference type="RefSeq" id="XP_002582682.1">
    <property type="nucleotide sequence ID" value="XM_002582636.1"/>
</dbReference>
<dbReference type="SMR" id="C4JZ54"/>
<dbReference type="FunCoup" id="C4JZ54">
    <property type="interactions" value="871"/>
</dbReference>
<dbReference type="STRING" id="336963.C4JZ54"/>
<dbReference type="GeneID" id="8444273"/>
<dbReference type="KEGG" id="ure:UREG_07455"/>
<dbReference type="VEuPathDB" id="FungiDB:UREG_07455"/>
<dbReference type="eggNOG" id="KOG2825">
    <property type="taxonomic scope" value="Eukaryota"/>
</dbReference>
<dbReference type="HOGENOM" id="CLU_040761_0_0_1"/>
<dbReference type="InParanoid" id="C4JZ54"/>
<dbReference type="OMA" id="MDAPYEF"/>
<dbReference type="OrthoDB" id="1770at2759"/>
<dbReference type="Proteomes" id="UP000002058">
    <property type="component" value="Unassembled WGS sequence"/>
</dbReference>
<dbReference type="GO" id="GO:0043529">
    <property type="term" value="C:GET complex"/>
    <property type="evidence" value="ECO:0007669"/>
    <property type="project" value="EnsemblFungi"/>
</dbReference>
<dbReference type="GO" id="GO:0005524">
    <property type="term" value="F:ATP binding"/>
    <property type="evidence" value="ECO:0007669"/>
    <property type="project" value="UniProtKB-UniRule"/>
</dbReference>
<dbReference type="GO" id="GO:0016887">
    <property type="term" value="F:ATP hydrolysis activity"/>
    <property type="evidence" value="ECO:0007669"/>
    <property type="project" value="EnsemblFungi"/>
</dbReference>
<dbReference type="GO" id="GO:0005085">
    <property type="term" value="F:guanyl-nucleotide exchange factor activity"/>
    <property type="evidence" value="ECO:0007669"/>
    <property type="project" value="EnsemblFungi"/>
</dbReference>
<dbReference type="GO" id="GO:0042802">
    <property type="term" value="F:identical protein binding"/>
    <property type="evidence" value="ECO:0007669"/>
    <property type="project" value="EnsemblFungi"/>
</dbReference>
<dbReference type="GO" id="GO:0046872">
    <property type="term" value="F:metal ion binding"/>
    <property type="evidence" value="ECO:0007669"/>
    <property type="project" value="UniProtKB-KW"/>
</dbReference>
<dbReference type="GO" id="GO:0044183">
    <property type="term" value="F:protein folding chaperone"/>
    <property type="evidence" value="ECO:0007669"/>
    <property type="project" value="EnsemblFungi"/>
</dbReference>
<dbReference type="GO" id="GO:0051082">
    <property type="term" value="F:unfolded protein binding"/>
    <property type="evidence" value="ECO:0007669"/>
    <property type="project" value="EnsemblFungi"/>
</dbReference>
<dbReference type="GO" id="GO:0034599">
    <property type="term" value="P:cellular response to oxidative stress"/>
    <property type="evidence" value="ECO:0007669"/>
    <property type="project" value="EnsemblFungi"/>
</dbReference>
<dbReference type="GO" id="GO:0000750">
    <property type="term" value="P:pheromone-dependent signal transduction involved in conjugation with cellular fusion"/>
    <property type="evidence" value="ECO:0007669"/>
    <property type="project" value="EnsemblFungi"/>
</dbReference>
<dbReference type="GO" id="GO:0006620">
    <property type="term" value="P:post-translational protein targeting to endoplasmic reticulum membrane"/>
    <property type="evidence" value="ECO:0007669"/>
    <property type="project" value="EnsemblFungi"/>
</dbReference>
<dbReference type="GO" id="GO:0009408">
    <property type="term" value="P:response to heat"/>
    <property type="evidence" value="ECO:0007669"/>
    <property type="project" value="EnsemblFungi"/>
</dbReference>
<dbReference type="GO" id="GO:0010038">
    <property type="term" value="P:response to metal ion"/>
    <property type="evidence" value="ECO:0007669"/>
    <property type="project" value="EnsemblFungi"/>
</dbReference>
<dbReference type="GO" id="GO:0006890">
    <property type="term" value="P:retrograde vesicle-mediated transport, Golgi to endoplasmic reticulum"/>
    <property type="evidence" value="ECO:0007669"/>
    <property type="project" value="EnsemblFungi"/>
</dbReference>
<dbReference type="GO" id="GO:0071816">
    <property type="term" value="P:tail-anchored membrane protein insertion into ER membrane"/>
    <property type="evidence" value="ECO:0007669"/>
    <property type="project" value="EnsemblFungi"/>
</dbReference>
<dbReference type="CDD" id="cd02035">
    <property type="entry name" value="ArsA"/>
    <property type="match status" value="1"/>
</dbReference>
<dbReference type="FunFam" id="3.40.50.300:FF:000235">
    <property type="entry name" value="ATPase ASNA1"/>
    <property type="match status" value="1"/>
</dbReference>
<dbReference type="Gene3D" id="3.40.50.300">
    <property type="entry name" value="P-loop containing nucleotide triphosphate hydrolases"/>
    <property type="match status" value="1"/>
</dbReference>
<dbReference type="HAMAP" id="MF_03112">
    <property type="entry name" value="Asna1_Get3"/>
    <property type="match status" value="1"/>
</dbReference>
<dbReference type="InterPro" id="IPR025723">
    <property type="entry name" value="Anion-transp_ATPase-like_dom"/>
</dbReference>
<dbReference type="InterPro" id="IPR016300">
    <property type="entry name" value="ATPase_ArsA/GET3"/>
</dbReference>
<dbReference type="InterPro" id="IPR027542">
    <property type="entry name" value="ATPase_ArsA/GET3_euk"/>
</dbReference>
<dbReference type="InterPro" id="IPR027417">
    <property type="entry name" value="P-loop_NTPase"/>
</dbReference>
<dbReference type="NCBIfam" id="TIGR00345">
    <property type="entry name" value="GET3_arsA_TRC40"/>
    <property type="match status" value="1"/>
</dbReference>
<dbReference type="PANTHER" id="PTHR10803">
    <property type="entry name" value="ARSENICAL PUMP-DRIVING ATPASE ARSENITE-TRANSLOCATING ATPASE"/>
    <property type="match status" value="1"/>
</dbReference>
<dbReference type="PANTHER" id="PTHR10803:SF3">
    <property type="entry name" value="ATPASE GET3"/>
    <property type="match status" value="1"/>
</dbReference>
<dbReference type="Pfam" id="PF02374">
    <property type="entry name" value="ArsA_ATPase"/>
    <property type="match status" value="1"/>
</dbReference>
<dbReference type="SUPFAM" id="SSF52540">
    <property type="entry name" value="P-loop containing nucleoside triphosphate hydrolases"/>
    <property type="match status" value="1"/>
</dbReference>
<comment type="function">
    <text evidence="1">ATPase required for the post-translational delivery of tail-anchored (TA) proteins to the endoplasmic reticulum. Recognizes and selectively binds the transmembrane domain of TA proteins in the cytosol. This complex then targets to the endoplasmic reticulum by membrane-bound receptors, where the tail-anchored protein is released for insertion. This process is regulated by ATP binding and hydrolysis. ATP binding drives the homodimer towards the closed dimer state, facilitating recognition of newly synthesized TA membrane proteins. ATP hydrolysis is required for insertion. Subsequently, the homodimer reverts towards the open dimer state, lowering its affinity for the membrane-bound receptor, and returning it to the cytosol to initiate a new round of targeting.</text>
</comment>
<comment type="subunit">
    <text evidence="1">Homodimer.</text>
</comment>
<comment type="subcellular location">
    <subcellularLocation>
        <location evidence="1">Cytoplasm</location>
    </subcellularLocation>
    <subcellularLocation>
        <location evidence="1">Endoplasmic reticulum</location>
    </subcellularLocation>
</comment>
<comment type="similarity">
    <text evidence="1">Belongs to the arsA ATPase family.</text>
</comment>
<organism>
    <name type="scientific">Uncinocarpus reesii (strain UAMH 1704)</name>
    <dbReference type="NCBI Taxonomy" id="336963"/>
    <lineage>
        <taxon>Eukaryota</taxon>
        <taxon>Fungi</taxon>
        <taxon>Dikarya</taxon>
        <taxon>Ascomycota</taxon>
        <taxon>Pezizomycotina</taxon>
        <taxon>Eurotiomycetes</taxon>
        <taxon>Eurotiomycetidae</taxon>
        <taxon>Onygenales</taxon>
        <taxon>Onygenaceae</taxon>
        <taxon>Uncinocarpus</taxon>
    </lineage>
</organism>
<name>GET3_UNCRE</name>
<feature type="chain" id="PRO_0000388234" description="ATPase GET3">
    <location>
        <begin position="1"/>
        <end position="338"/>
    </location>
</feature>
<feature type="active site" evidence="1">
    <location>
        <position position="62"/>
    </location>
</feature>
<feature type="binding site" evidence="1">
    <location>
        <begin position="33"/>
        <end position="40"/>
    </location>
    <ligand>
        <name>ATP</name>
        <dbReference type="ChEBI" id="CHEBI:30616"/>
    </ligand>
</feature>
<feature type="binding site" evidence="1">
    <location>
        <position position="242"/>
    </location>
    <ligand>
        <name>ATP</name>
        <dbReference type="ChEBI" id="CHEBI:30616"/>
    </ligand>
</feature>
<feature type="binding site" evidence="1">
    <location>
        <position position="269"/>
    </location>
    <ligand>
        <name>ATP</name>
        <dbReference type="ChEBI" id="CHEBI:30616"/>
    </ligand>
</feature>
<feature type="binding site" evidence="1">
    <location>
        <position position="280"/>
    </location>
    <ligand>
        <name>Zn(2+)</name>
        <dbReference type="ChEBI" id="CHEBI:29105"/>
        <note>ligand shared between dimeric partners</note>
    </ligand>
</feature>
<feature type="binding site" evidence="1">
    <location>
        <position position="283"/>
    </location>
    <ligand>
        <name>Zn(2+)</name>
        <dbReference type="ChEBI" id="CHEBI:29105"/>
        <note>ligand shared between dimeric partners</note>
    </ligand>
</feature>
<evidence type="ECO:0000255" key="1">
    <source>
        <dbReference type="HAMAP-Rule" id="MF_03112"/>
    </source>
</evidence>
<accession>C4JZ54</accession>
<sequence>MSSAVVPADDILEPTLQNILDQKSLRWIFVGGKGGVGKTTTSCSLAIQLAKVRKSVLLISTDPAHNLSDAFGQKFGKEARLIDGFDNLSAMEIDPSASMQDLMAAGGDQAEDMGFGLGGMMQDLAFSIPGVDEAMSFAEVLKQVKSLSYEVIVFDTAPTGHTLRFLQFPTVLEKGLAKLSQLSSQFGPMLNSVLGARGGLPGGQNLDDVLSKMESLRETISEVNTQFKNADLTTFVCVCIAEFLSLYETERMIQELTSYHIDTHAIVVNQLLFPGKDSTCDQCKARRKMQKKYLNEIEELYEDFNVVRMPLLVEEVRGKEKLERFSDMLVHPYQPPQE</sequence>
<gene>
    <name evidence="1" type="primary">GET3</name>
    <name type="ORF">UREG_07455</name>
</gene>
<reference key="1">
    <citation type="journal article" date="2009" name="Genome Res.">
        <title>Comparative genomic analyses of the human fungal pathogens Coccidioides and their relatives.</title>
        <authorList>
            <person name="Sharpton T.J."/>
            <person name="Stajich J.E."/>
            <person name="Rounsley S.D."/>
            <person name="Gardner M.J."/>
            <person name="Wortman J.R."/>
            <person name="Jordar V.S."/>
            <person name="Maiti R."/>
            <person name="Kodira C.D."/>
            <person name="Neafsey D.E."/>
            <person name="Zeng Q."/>
            <person name="Hung C.-Y."/>
            <person name="McMahan C."/>
            <person name="Muszewska A."/>
            <person name="Grynberg M."/>
            <person name="Mandel M.A."/>
            <person name="Kellner E.M."/>
            <person name="Barker B.M."/>
            <person name="Galgiani J.N."/>
            <person name="Orbach M.J."/>
            <person name="Kirkland T.N."/>
            <person name="Cole G.T."/>
            <person name="Henn M.R."/>
            <person name="Birren B.W."/>
            <person name="Taylor J.W."/>
        </authorList>
    </citation>
    <scope>NUCLEOTIDE SEQUENCE [LARGE SCALE GENOMIC DNA]</scope>
    <source>
        <strain>UAMH 1704</strain>
    </source>
</reference>
<proteinExistence type="inferred from homology"/>
<keyword id="KW-0067">ATP-binding</keyword>
<keyword id="KW-0963">Cytoplasm</keyword>
<keyword id="KW-0256">Endoplasmic reticulum</keyword>
<keyword id="KW-0378">Hydrolase</keyword>
<keyword id="KW-0479">Metal-binding</keyword>
<keyword id="KW-0547">Nucleotide-binding</keyword>
<keyword id="KW-1185">Reference proteome</keyword>
<keyword id="KW-0813">Transport</keyword>
<keyword id="KW-0862">Zinc</keyword>
<protein>
    <recommendedName>
        <fullName evidence="1">ATPase GET3</fullName>
        <ecNumber evidence="1">3.6.-.-</ecNumber>
    </recommendedName>
    <alternativeName>
        <fullName evidence="1">Arsenical pump-driving ATPase</fullName>
    </alternativeName>
    <alternativeName>
        <fullName evidence="1">Arsenite-stimulated ATPase</fullName>
    </alternativeName>
    <alternativeName>
        <fullName evidence="1">Golgi to ER traffic protein 3</fullName>
    </alternativeName>
    <alternativeName>
        <fullName evidence="1">Guided entry of tail-anchored proteins 3</fullName>
    </alternativeName>
</protein>